<organism>
    <name type="scientific">Escherichia coli (strain K12)</name>
    <dbReference type="NCBI Taxonomy" id="83333"/>
    <lineage>
        <taxon>Bacteria</taxon>
        <taxon>Pseudomonadati</taxon>
        <taxon>Pseudomonadota</taxon>
        <taxon>Gammaproteobacteria</taxon>
        <taxon>Enterobacterales</taxon>
        <taxon>Enterobacteriaceae</taxon>
        <taxon>Escherichia</taxon>
    </lineage>
</organism>
<comment type="function">
    <text evidence="1">Single-stranded-DNA-specific exonuclease. Required for many types of recombinational events, although the stringency of the requirement for RecJ appears to vary with the type of recombinational event monitored and the other recombination gene products which are available.</text>
</comment>
<comment type="interaction">
    <interactant intactId="EBI-556893">
        <id>P21893</id>
    </interactant>
    <interactant intactId="EBI-552080">
        <id>P14294</id>
        <label>topB</label>
    </interactant>
    <organismsDiffer>false</organismsDiffer>
    <experiments>4</experiments>
</comment>
<comment type="similarity">
    <text evidence="2">Belongs to the RecJ family.</text>
</comment>
<protein>
    <recommendedName>
        <fullName>Single-stranded-DNA-specific exonuclease RecJ</fullName>
        <ecNumber>3.1.-.-</ecNumber>
    </recommendedName>
</protein>
<gene>
    <name type="primary">recJ</name>
    <name type="ordered locus">b2892</name>
    <name type="ordered locus">JW2860</name>
</gene>
<evidence type="ECO:0000269" key="1">
    <source>
    </source>
</evidence>
<evidence type="ECO:0000305" key="2"/>
<sequence length="577" mass="63389">MKQQIQLRRREVDETADLPAELPPLLRRLYASRGVRSAQELERSVKGMLPWQQLSGVEKAVEILYNAFREGTRIIVVGDFDADGATSTALSVLAMRSLGCSNIDYLVPNRFEDGYGLSPEVVDQAHARGAQLIVTVDNGISSHAGVEHARSLGIPVIVTDHHLPGDTLPAAEAIINPNLRDCNFPSKSLAGVGVAFYLMLALRTFLRDQGWFDERNIAIPNLAELLDLVALGTVADVVPLDANNRILTWQGMSRIRAGKCRPGIKALLEVANRDAQKLAASDLGFALGPRLNAAGRLDDMSVGVALLLCDNIGEARVLANELDALNQTRKEIEQGMQIEALTLCEKLERSRDTLPGGLAMYHPEWHQGVVGILASRIKERFHRPVIAFAPAGDGTLKGSGRSIQGLHMRDALERLDTLYPGMMLKFGGHAMAAGLSLEEDKFKLFQQRFGELVTEWLDPSLLQGEVVSDGPLSPAEMTMEVAQLLRDAGPWGQMFPEPLFDGHFRLLQQRLVGERHLKVMVEPVGGGPLLDGIAFNVDTALWPDNGVREVQLAYKLDINEFRGNRSLQIIIDNIWPI</sequence>
<name>RECJ_ECOLI</name>
<accession>P21893</accession>
<accession>Q2M9U9</accession>
<accession>Q46823</accession>
<reference key="1">
    <citation type="journal article" date="1991" name="J. Bacteriol.">
        <title>Nucleotide sequence of the Escherichia coli recJ chromosomal region and construction of recJ-overexpression plasmids.</title>
        <authorList>
            <person name="Lovett S.T."/>
            <person name="Kolodner R.D."/>
        </authorList>
    </citation>
    <scope>NUCLEOTIDE SEQUENCE [GENOMIC DNA]</scope>
    <source>
        <strain>K12</strain>
    </source>
</reference>
<reference key="2">
    <citation type="journal article" date="1997" name="Science">
        <title>The complete genome sequence of Escherichia coli K-12.</title>
        <authorList>
            <person name="Blattner F.R."/>
            <person name="Plunkett G. III"/>
            <person name="Bloch C.A."/>
            <person name="Perna N.T."/>
            <person name="Burland V."/>
            <person name="Riley M."/>
            <person name="Collado-Vides J."/>
            <person name="Glasner J.D."/>
            <person name="Rode C.K."/>
            <person name="Mayhew G.F."/>
            <person name="Gregor J."/>
            <person name="Davis N.W."/>
            <person name="Kirkpatrick H.A."/>
            <person name="Goeden M.A."/>
            <person name="Rose D.J."/>
            <person name="Mau B."/>
            <person name="Shao Y."/>
        </authorList>
    </citation>
    <scope>NUCLEOTIDE SEQUENCE [LARGE SCALE GENOMIC DNA]</scope>
    <source>
        <strain>K12 / MG1655 / ATCC 47076</strain>
    </source>
</reference>
<reference key="3">
    <citation type="journal article" date="2006" name="Mol. Syst. Biol.">
        <title>Highly accurate genome sequences of Escherichia coli K-12 strains MG1655 and W3110.</title>
        <authorList>
            <person name="Hayashi K."/>
            <person name="Morooka N."/>
            <person name="Yamamoto Y."/>
            <person name="Fujita K."/>
            <person name="Isono K."/>
            <person name="Choi S."/>
            <person name="Ohtsubo E."/>
            <person name="Baba T."/>
            <person name="Wanner B.L."/>
            <person name="Mori H."/>
            <person name="Horiuchi T."/>
        </authorList>
    </citation>
    <scope>NUCLEOTIDE SEQUENCE [LARGE SCALE GENOMIC DNA]</scope>
    <source>
        <strain>K12 / W3110 / ATCC 27325 / DSM 5911</strain>
    </source>
</reference>
<reference key="4">
    <citation type="journal article" date="1989" name="Proc. Natl. Acad. Sci. U.S.A.">
        <title>Identification and purification of a single-stranded-DNA-specific exonuclease encoded by the recJ gene of Escherichia coli.</title>
        <authorList>
            <person name="Lovett S.T."/>
            <person name="Kolodner R.D."/>
        </authorList>
    </citation>
    <scope>FUNCTION</scope>
    <scope>PROTEIN SEQUENCE OF 1-18</scope>
</reference>
<proteinExistence type="evidence at protein level"/>
<feature type="chain" id="PRO_0000097228" description="Single-stranded-DNA-specific exonuclease RecJ">
    <location>
        <begin position="1"/>
        <end position="577"/>
    </location>
</feature>
<feature type="sequence conflict" description="In Ref. 1; AAA62789." evidence="2" ref="1">
    <original>Q</original>
    <variation>H</variation>
    <location>
        <position position="6"/>
    </location>
</feature>
<feature type="sequence conflict" description="In Ref. 1; AAA62789." evidence="2" ref="1">
    <original>A</original>
    <variation>AA</variation>
    <location>
        <position position="20"/>
    </location>
</feature>
<keyword id="KW-0903">Direct protein sequencing</keyword>
<keyword id="KW-0269">Exonuclease</keyword>
<keyword id="KW-0378">Hydrolase</keyword>
<keyword id="KW-0540">Nuclease</keyword>
<keyword id="KW-1185">Reference proteome</keyword>
<dbReference type="EC" id="3.1.-.-"/>
<dbReference type="EMBL" id="M54884">
    <property type="protein sequence ID" value="AAA62789.1"/>
    <property type="molecule type" value="Genomic_DNA"/>
</dbReference>
<dbReference type="EMBL" id="U28375">
    <property type="protein sequence ID" value="AAA83073.1"/>
    <property type="molecule type" value="Genomic_DNA"/>
</dbReference>
<dbReference type="EMBL" id="U00096">
    <property type="protein sequence ID" value="AAC75930.1"/>
    <property type="molecule type" value="Genomic_DNA"/>
</dbReference>
<dbReference type="EMBL" id="AP009048">
    <property type="protein sequence ID" value="BAE76957.1"/>
    <property type="molecule type" value="Genomic_DNA"/>
</dbReference>
<dbReference type="PIR" id="D65073">
    <property type="entry name" value="D65073"/>
</dbReference>
<dbReference type="RefSeq" id="NP_417368.1">
    <property type="nucleotide sequence ID" value="NC_000913.3"/>
</dbReference>
<dbReference type="RefSeq" id="WP_000813200.1">
    <property type="nucleotide sequence ID" value="NZ_LN832404.1"/>
</dbReference>
<dbReference type="SMR" id="P21893"/>
<dbReference type="BioGRID" id="4262338">
    <property type="interactions" value="181"/>
</dbReference>
<dbReference type="BioGRID" id="851690">
    <property type="interactions" value="2"/>
</dbReference>
<dbReference type="DIP" id="DIP-10654N"/>
<dbReference type="FunCoup" id="P21893">
    <property type="interactions" value="521"/>
</dbReference>
<dbReference type="IntAct" id="P21893">
    <property type="interactions" value="26"/>
</dbReference>
<dbReference type="STRING" id="511145.b2892"/>
<dbReference type="jPOST" id="P21893"/>
<dbReference type="PaxDb" id="511145-b2892"/>
<dbReference type="EnsemblBacteria" id="AAC75930">
    <property type="protein sequence ID" value="AAC75930"/>
    <property type="gene ID" value="b2892"/>
</dbReference>
<dbReference type="GeneID" id="947367"/>
<dbReference type="KEGG" id="ecj:JW2860"/>
<dbReference type="KEGG" id="eco:b2892"/>
<dbReference type="KEGG" id="ecoc:C3026_15860"/>
<dbReference type="PATRIC" id="fig|1411691.4.peg.3841"/>
<dbReference type="EchoBASE" id="EB0823"/>
<dbReference type="eggNOG" id="COG0608">
    <property type="taxonomic scope" value="Bacteria"/>
</dbReference>
<dbReference type="HOGENOM" id="CLU_009736_5_1_6"/>
<dbReference type="InParanoid" id="P21893"/>
<dbReference type="OMA" id="NAGPWGQ"/>
<dbReference type="OrthoDB" id="9809852at2"/>
<dbReference type="PhylomeDB" id="P21893"/>
<dbReference type="BioCyc" id="EcoCyc:EG10830-MONOMER"/>
<dbReference type="BioCyc" id="MetaCyc:EG10830-MONOMER"/>
<dbReference type="PRO" id="PR:P21893"/>
<dbReference type="Proteomes" id="UP000000625">
    <property type="component" value="Chromosome"/>
</dbReference>
<dbReference type="GO" id="GO:0003676">
    <property type="term" value="F:nucleic acid binding"/>
    <property type="evidence" value="ECO:0007669"/>
    <property type="project" value="InterPro"/>
</dbReference>
<dbReference type="GO" id="GO:0045145">
    <property type="term" value="F:single-stranded DNA 5'-3' DNA exonuclease activity"/>
    <property type="evidence" value="ECO:0000314"/>
    <property type="project" value="EcoCyc"/>
</dbReference>
<dbReference type="GO" id="GO:0006310">
    <property type="term" value="P:DNA recombination"/>
    <property type="evidence" value="ECO:0000315"/>
    <property type="project" value="EcoCyc"/>
</dbReference>
<dbReference type="GO" id="GO:0006281">
    <property type="term" value="P:DNA repair"/>
    <property type="evidence" value="ECO:0000315"/>
    <property type="project" value="EcoCyc"/>
</dbReference>
<dbReference type="GO" id="GO:0010165">
    <property type="term" value="P:response to X-ray"/>
    <property type="evidence" value="ECO:0000315"/>
    <property type="project" value="EcoCyc"/>
</dbReference>
<dbReference type="FunFam" id="3.90.1640.30:FF:000001">
    <property type="entry name" value="Single-stranded-DNA-specific exonuclease RecJ"/>
    <property type="match status" value="1"/>
</dbReference>
<dbReference type="FunFam" id="3.10.310.30:FF:000001">
    <property type="entry name" value="Single-stranded-DNA-specific exonuclease recJ"/>
    <property type="match status" value="1"/>
</dbReference>
<dbReference type="Gene3D" id="3.10.310.30">
    <property type="match status" value="1"/>
</dbReference>
<dbReference type="Gene3D" id="3.90.1640.30">
    <property type="match status" value="1"/>
</dbReference>
<dbReference type="InterPro" id="IPR001667">
    <property type="entry name" value="DDH_dom"/>
</dbReference>
<dbReference type="InterPro" id="IPR038763">
    <property type="entry name" value="DHH_sf"/>
</dbReference>
<dbReference type="InterPro" id="IPR003156">
    <property type="entry name" value="DHHA1_dom"/>
</dbReference>
<dbReference type="InterPro" id="IPR004610">
    <property type="entry name" value="RecJ"/>
</dbReference>
<dbReference type="InterPro" id="IPR041122">
    <property type="entry name" value="RecJ_OB"/>
</dbReference>
<dbReference type="InterPro" id="IPR051673">
    <property type="entry name" value="SSDNA_exonuclease_RecJ"/>
</dbReference>
<dbReference type="NCBIfam" id="NF008290">
    <property type="entry name" value="PRK11070.1"/>
    <property type="match status" value="1"/>
</dbReference>
<dbReference type="NCBIfam" id="TIGR00644">
    <property type="entry name" value="recJ"/>
    <property type="match status" value="1"/>
</dbReference>
<dbReference type="PANTHER" id="PTHR30255">
    <property type="entry name" value="SINGLE-STRANDED-DNA-SPECIFIC EXONUCLEASE RECJ"/>
    <property type="match status" value="1"/>
</dbReference>
<dbReference type="PANTHER" id="PTHR30255:SF2">
    <property type="entry name" value="SINGLE-STRANDED-DNA-SPECIFIC EXONUCLEASE RECJ"/>
    <property type="match status" value="1"/>
</dbReference>
<dbReference type="Pfam" id="PF01368">
    <property type="entry name" value="DHH"/>
    <property type="match status" value="1"/>
</dbReference>
<dbReference type="Pfam" id="PF02272">
    <property type="entry name" value="DHHA1"/>
    <property type="match status" value="1"/>
</dbReference>
<dbReference type="Pfam" id="PF17768">
    <property type="entry name" value="RecJ_OB"/>
    <property type="match status" value="1"/>
</dbReference>
<dbReference type="SUPFAM" id="SSF64182">
    <property type="entry name" value="DHH phosphoesterases"/>
    <property type="match status" value="1"/>
</dbReference>